<proteinExistence type="inferred from homology"/>
<name>VL2_HPVME</name>
<dbReference type="EMBL" id="M73258">
    <property type="protein sequence ID" value="AAF14009.1"/>
    <property type="molecule type" value="Genomic_DNA"/>
</dbReference>
<dbReference type="PIR" id="A40509">
    <property type="entry name" value="P2WLPR"/>
</dbReference>
<dbReference type="GO" id="GO:0043657">
    <property type="term" value="C:host cell"/>
    <property type="evidence" value="ECO:0007669"/>
    <property type="project" value="GOC"/>
</dbReference>
<dbReference type="GO" id="GO:0044174">
    <property type="term" value="C:host cell endosome"/>
    <property type="evidence" value="ECO:0007669"/>
    <property type="project" value="UniProtKB-KW"/>
</dbReference>
<dbReference type="GO" id="GO:0044177">
    <property type="term" value="C:host cell Golgi apparatus"/>
    <property type="evidence" value="ECO:0007669"/>
    <property type="project" value="UniProtKB-SubCell"/>
</dbReference>
<dbReference type="GO" id="GO:0042025">
    <property type="term" value="C:host cell nucleus"/>
    <property type="evidence" value="ECO:0007669"/>
    <property type="project" value="UniProtKB-SubCell"/>
</dbReference>
<dbReference type="GO" id="GO:0019028">
    <property type="term" value="C:viral capsid"/>
    <property type="evidence" value="ECO:0007669"/>
    <property type="project" value="UniProtKB-UniRule"/>
</dbReference>
<dbReference type="GO" id="GO:0003677">
    <property type="term" value="F:DNA binding"/>
    <property type="evidence" value="ECO:0007669"/>
    <property type="project" value="UniProtKB-UniRule"/>
</dbReference>
<dbReference type="GO" id="GO:0005198">
    <property type="term" value="F:structural molecule activity"/>
    <property type="evidence" value="ECO:0007669"/>
    <property type="project" value="UniProtKB-UniRule"/>
</dbReference>
<dbReference type="GO" id="GO:0075521">
    <property type="term" value="P:microtubule-dependent intracellular transport of viral material towards nucleus"/>
    <property type="evidence" value="ECO:0007669"/>
    <property type="project" value="UniProtKB-UniRule"/>
</dbReference>
<dbReference type="GO" id="GO:0046718">
    <property type="term" value="P:symbiont entry into host cell"/>
    <property type="evidence" value="ECO:0007669"/>
    <property type="project" value="UniProtKB-KW"/>
</dbReference>
<dbReference type="GO" id="GO:0075732">
    <property type="term" value="P:viral penetration into host nucleus"/>
    <property type="evidence" value="ECO:0007669"/>
    <property type="project" value="UniProtKB-KW"/>
</dbReference>
<dbReference type="HAMAP" id="MF_04003">
    <property type="entry name" value="PPV_L2"/>
    <property type="match status" value="1"/>
</dbReference>
<dbReference type="InterPro" id="IPR000784">
    <property type="entry name" value="Late_L2"/>
</dbReference>
<dbReference type="Pfam" id="PF00513">
    <property type="entry name" value="Late_protein_L2"/>
    <property type="match status" value="1"/>
</dbReference>
<reference key="1">
    <citation type="journal article" date="1991" name="J. Virol.">
        <title>Characterization of a novel human papillomavirus DNA in the cervical carcinoma cell line ME180.</title>
        <authorList>
            <person name="Reuter S."/>
            <person name="Delius H."/>
            <person name="Kahn T."/>
            <person name="Hofmann B."/>
            <person name="zur Hausen H."/>
            <person name="Schwarz E."/>
        </authorList>
    </citation>
    <scope>NUCLEOTIDE SEQUENCE [GENOMIC DNA]</scope>
</reference>
<gene>
    <name evidence="1" type="primary">L2</name>
</gene>
<accession>P27965</accession>
<feature type="chain" id="PRO_0000133565" description="Minor capsid protein L2">
    <location>
        <begin position="1"/>
        <end position="469"/>
    </location>
</feature>
<feature type="short sequence motif" description="Nuclear localization signal" evidence="1">
    <location>
        <begin position="1"/>
        <end position="12"/>
    </location>
</feature>
<feature type="short sequence motif" description="Nuclear localization signal" evidence="1">
    <location>
        <begin position="450"/>
        <end position="458"/>
    </location>
</feature>
<feature type="disulfide bond" evidence="1">
    <location>
        <begin position="21"/>
        <end position="27"/>
    </location>
</feature>
<sequence>MVSHRAARRKRASATELYKTCKQSGTCPPDVINKVEGTTLADKLLQWTSLGIFLGGLGIGTGSGTGGRTGYIPLGGKPNTVVDVSPARPPVVIEPVGPTEPSIVQLVEDSSVITSGTPVPTFTGTSGFEITSSSTTTPAVLDITPSSGSVQVSSTSFTNPAFADPTIIEVPQTGEVSGNVFVSTPTSGTHGYEEIPMQVFATHGTGTEPISSTPIPGVSRVAGPRLYSRAHQQVRVSNFDFVTHPSSFVTFDNPAFEPVDTTLTYEPADIAPDPDFLDIVRLHRPALTSRRGTVRFSRVGKKATMFTRRGTQIGAQVHYYHDISGIAPADSIELQPLVAPEQSDPMDTLYDIYAPDTDNTTVLDTAFHNATFTSRSHISVPSLASTASTTYANTTIPIGTAWNTPVNTGPDVVLPATSPQLPLTPSTPIDTTYAITIYGTNYYLLPLLFFLLKKRKRLPYFFADGIVAL</sequence>
<comment type="function">
    <text evidence="1">Minor protein of the capsid that localizes along the inner surface of the virion, within the central cavities beneath the L1 pentamers. Plays a role in capsid stabilization through interaction with the major capsid protein L1. Once the virion enters the host cell, L2 escorts the genomic DNA into the nucleus by promoting escape from the endosomal compartments and traffic through the host Golgi network. Mechanistically, the C-terminus of L2 possesses a cell-penetrating peptide that protudes from the host endosome, interacts with host cytoplasmic retromer cargo and thereby mediates the capsid delivery to the host trans-Golgi network. Plays a role through its interaction with host dynein in the intracellular microtubule-dependent transport of viral capsid toward the nucleus. Mediates the viral genome import into the nucleus through binding to host importins. Once within the nucleus, L2 localizes viral genomes to host PML bodies in order to activate early gene expression for establishment of infection. Later on, promotes late gene expression by interacting with the viral E2 protein and by inhibiting its transcriptional activation functions. During virion assembly, encapsidates the genome by direct interaction with the viral DNA.</text>
</comment>
<comment type="subunit">
    <text evidence="1">Interacts with major capsid protein L1. Interacts with E2; this interaction inhibits E2 transcriptional activity but not the DNA replication function E2. Interacts with host GADD45GIP1. Interacts with host HSPA8; this interaction is required for L2 nuclear translocation. Interacts with host importins KPNB2 and KPNB3. Forms a complex with importin alpha2-beta1 heterodimers via interaction with the importin alpha2 adapter. Interacts with host DYNLT1; this interaction is essential for virus intracellular transport during entry. Interacts (via C-terminus) with host retromer subunits VPS35 and VPS29.</text>
</comment>
<comment type="subcellular location">
    <subcellularLocation>
        <location evidence="1">Virion</location>
    </subcellularLocation>
    <subcellularLocation>
        <location evidence="1">Host nucleus</location>
    </subcellularLocation>
    <subcellularLocation>
        <location evidence="1">Host early endosome</location>
    </subcellularLocation>
    <subcellularLocation>
        <location evidence="1">Host Golgi apparatus</location>
    </subcellularLocation>
</comment>
<comment type="PTM">
    <text evidence="1">Highly phosphorylated.</text>
</comment>
<comment type="similarity">
    <text evidence="1">Belongs to the papillomaviridae L2 protein family.</text>
</comment>
<protein>
    <recommendedName>
        <fullName evidence="1">Minor capsid protein L2</fullName>
    </recommendedName>
</protein>
<evidence type="ECO:0000255" key="1">
    <source>
        <dbReference type="HAMAP-Rule" id="MF_04003"/>
    </source>
</evidence>
<keyword id="KW-0167">Capsid protein</keyword>
<keyword id="KW-1176">Cytoplasmic inwards viral transport</keyword>
<keyword id="KW-1015">Disulfide bond</keyword>
<keyword id="KW-0238">DNA-binding</keyword>
<keyword id="KW-1039">Host endosome</keyword>
<keyword id="KW-1040">Host Golgi apparatus</keyword>
<keyword id="KW-1048">Host nucleus</keyword>
<keyword id="KW-0945">Host-virus interaction</keyword>
<keyword id="KW-0426">Late protein</keyword>
<keyword id="KW-1177">Microtubular inwards viral transport</keyword>
<keyword id="KW-0597">Phosphoprotein</keyword>
<keyword id="KW-1163">Viral penetration into host nucleus</keyword>
<keyword id="KW-0946">Virion</keyword>
<keyword id="KW-1160">Virus entry into host cell</keyword>
<organismHost>
    <name type="scientific">Homo sapiens</name>
    <name type="common">Human</name>
    <dbReference type="NCBI Taxonomy" id="9606"/>
</organismHost>
<organism>
    <name type="scientific">Human papillomavirus type ME180</name>
    <dbReference type="NCBI Taxonomy" id="10602"/>
    <lineage>
        <taxon>Viruses</taxon>
        <taxon>Monodnaviria</taxon>
        <taxon>Shotokuvirae</taxon>
        <taxon>Cossaviricota</taxon>
        <taxon>Papovaviricetes</taxon>
        <taxon>Zurhausenvirales</taxon>
        <taxon>Papillomaviridae</taxon>
    </lineage>
</organism>